<evidence type="ECO:0000255" key="1">
    <source>
        <dbReference type="HAMAP-Rule" id="MF_00387"/>
    </source>
</evidence>
<protein>
    <recommendedName>
        <fullName evidence="1">Acyl-[acyl-carrier-protein]--UDP-N-acetylglucosamine O-acyltransferase</fullName>
        <shortName evidence="1">UDP-N-acetylglucosamine acyltransferase</shortName>
        <ecNumber evidence="1">2.3.1.129</ecNumber>
    </recommendedName>
</protein>
<dbReference type="EC" id="2.3.1.129" evidence="1"/>
<dbReference type="EMBL" id="AM884176">
    <property type="protein sequence ID" value="CAP04231.1"/>
    <property type="molecule type" value="Genomic_DNA"/>
</dbReference>
<dbReference type="RefSeq" id="WP_009873878.1">
    <property type="nucleotide sequence ID" value="NC_010287.1"/>
</dbReference>
<dbReference type="RefSeq" id="YP_001654864.1">
    <property type="nucleotide sequence ID" value="NC_010287.1"/>
</dbReference>
<dbReference type="SMR" id="B0B8A5"/>
<dbReference type="KEGG" id="ctb:CTL0793"/>
<dbReference type="PATRIC" id="fig|471472.4.peg.850"/>
<dbReference type="HOGENOM" id="CLU_061249_0_0_0"/>
<dbReference type="UniPathway" id="UPA00359">
    <property type="reaction ID" value="UER00477"/>
</dbReference>
<dbReference type="Proteomes" id="UP001154402">
    <property type="component" value="Chromosome"/>
</dbReference>
<dbReference type="GO" id="GO:0005737">
    <property type="term" value="C:cytoplasm"/>
    <property type="evidence" value="ECO:0007669"/>
    <property type="project" value="UniProtKB-SubCell"/>
</dbReference>
<dbReference type="GO" id="GO:0016020">
    <property type="term" value="C:membrane"/>
    <property type="evidence" value="ECO:0007669"/>
    <property type="project" value="GOC"/>
</dbReference>
<dbReference type="GO" id="GO:0008780">
    <property type="term" value="F:acyl-[acyl-carrier-protein]-UDP-N-acetylglucosamine O-acyltransferase activity"/>
    <property type="evidence" value="ECO:0007669"/>
    <property type="project" value="UniProtKB-UniRule"/>
</dbReference>
<dbReference type="GO" id="GO:0009245">
    <property type="term" value="P:lipid A biosynthetic process"/>
    <property type="evidence" value="ECO:0007669"/>
    <property type="project" value="UniProtKB-UniRule"/>
</dbReference>
<dbReference type="CDD" id="cd03351">
    <property type="entry name" value="LbH_UDP-GlcNAc_AT"/>
    <property type="match status" value="1"/>
</dbReference>
<dbReference type="Gene3D" id="2.160.10.10">
    <property type="entry name" value="Hexapeptide repeat proteins"/>
    <property type="match status" value="1"/>
</dbReference>
<dbReference type="Gene3D" id="1.20.1180.10">
    <property type="entry name" value="Udp N-acetylglucosamine O-acyltransferase, C-terminal domain"/>
    <property type="match status" value="1"/>
</dbReference>
<dbReference type="HAMAP" id="MF_00387">
    <property type="entry name" value="LpxA"/>
    <property type="match status" value="1"/>
</dbReference>
<dbReference type="InterPro" id="IPR029098">
    <property type="entry name" value="Acetyltransf_C"/>
</dbReference>
<dbReference type="InterPro" id="IPR037157">
    <property type="entry name" value="Acetyltransf_C_sf"/>
</dbReference>
<dbReference type="InterPro" id="IPR001451">
    <property type="entry name" value="Hexapep"/>
</dbReference>
<dbReference type="InterPro" id="IPR018357">
    <property type="entry name" value="Hexapep_transf_CS"/>
</dbReference>
<dbReference type="InterPro" id="IPR010137">
    <property type="entry name" value="Lipid_A_LpxA"/>
</dbReference>
<dbReference type="InterPro" id="IPR011004">
    <property type="entry name" value="Trimer_LpxA-like_sf"/>
</dbReference>
<dbReference type="NCBIfam" id="TIGR01852">
    <property type="entry name" value="lipid_A_lpxA"/>
    <property type="match status" value="1"/>
</dbReference>
<dbReference type="NCBIfam" id="NF003657">
    <property type="entry name" value="PRK05289.1"/>
    <property type="match status" value="1"/>
</dbReference>
<dbReference type="PANTHER" id="PTHR43480">
    <property type="entry name" value="ACYL-[ACYL-CARRIER-PROTEIN]--UDP-N-ACETYLGLUCOSAMINE O-ACYLTRANSFERASE"/>
    <property type="match status" value="1"/>
</dbReference>
<dbReference type="PANTHER" id="PTHR43480:SF1">
    <property type="entry name" value="ACYL-[ACYL-CARRIER-PROTEIN]--UDP-N-ACETYLGLUCOSAMINE O-ACYLTRANSFERASE, MITOCHONDRIAL-RELATED"/>
    <property type="match status" value="1"/>
</dbReference>
<dbReference type="Pfam" id="PF13720">
    <property type="entry name" value="Acetyltransf_11"/>
    <property type="match status" value="1"/>
</dbReference>
<dbReference type="Pfam" id="PF00132">
    <property type="entry name" value="Hexapep"/>
    <property type="match status" value="1"/>
</dbReference>
<dbReference type="PIRSF" id="PIRSF000456">
    <property type="entry name" value="UDP-GlcNAc_acltr"/>
    <property type="match status" value="1"/>
</dbReference>
<dbReference type="SUPFAM" id="SSF51161">
    <property type="entry name" value="Trimeric LpxA-like enzymes"/>
    <property type="match status" value="1"/>
</dbReference>
<dbReference type="PROSITE" id="PS00101">
    <property type="entry name" value="HEXAPEP_TRANSFERASES"/>
    <property type="match status" value="1"/>
</dbReference>
<feature type="chain" id="PRO_1000122695" description="Acyl-[acyl-carrier-protein]--UDP-N-acetylglucosamine O-acyltransferase">
    <location>
        <begin position="1"/>
        <end position="280"/>
    </location>
</feature>
<name>LPXA_CHLT2</name>
<proteinExistence type="inferred from homology"/>
<accession>B0B8A5</accession>
<reference key="1">
    <citation type="journal article" date="2008" name="Genome Res.">
        <title>Chlamydia trachomatis: genome sequence analysis of lymphogranuloma venereum isolates.</title>
        <authorList>
            <person name="Thomson N.R."/>
            <person name="Holden M.T.G."/>
            <person name="Carder C."/>
            <person name="Lennard N."/>
            <person name="Lockey S.J."/>
            <person name="Marsh P."/>
            <person name="Skipp P."/>
            <person name="O'Connor C.D."/>
            <person name="Goodhead I."/>
            <person name="Norbertzcak H."/>
            <person name="Harris B."/>
            <person name="Ormond D."/>
            <person name="Rance R."/>
            <person name="Quail M.A."/>
            <person name="Parkhill J."/>
            <person name="Stephens R.S."/>
            <person name="Clarke I.N."/>
        </authorList>
    </citation>
    <scope>NUCLEOTIDE SEQUENCE [LARGE SCALE GENOMIC DNA]</scope>
    <source>
        <strain>ATCC VR-902B / DSM 19102 / 434/Bu</strain>
    </source>
</reference>
<comment type="function">
    <text evidence="1">Involved in the biosynthesis of lipid A, a phosphorylated glycolipid that anchors the lipopolysaccharide to the outer membrane of the cell.</text>
</comment>
<comment type="catalytic activity">
    <reaction evidence="1">
        <text>a (3R)-hydroxyacyl-[ACP] + UDP-N-acetyl-alpha-D-glucosamine = a UDP-3-O-[(3R)-3-hydroxyacyl]-N-acetyl-alpha-D-glucosamine + holo-[ACP]</text>
        <dbReference type="Rhea" id="RHEA:67812"/>
        <dbReference type="Rhea" id="RHEA-COMP:9685"/>
        <dbReference type="Rhea" id="RHEA-COMP:9945"/>
        <dbReference type="ChEBI" id="CHEBI:57705"/>
        <dbReference type="ChEBI" id="CHEBI:64479"/>
        <dbReference type="ChEBI" id="CHEBI:78827"/>
        <dbReference type="ChEBI" id="CHEBI:173225"/>
        <dbReference type="EC" id="2.3.1.129"/>
    </reaction>
</comment>
<comment type="pathway">
    <text evidence="1">Glycolipid biosynthesis; lipid IV(A) biosynthesis; lipid IV(A) from (3R)-3-hydroxytetradecanoyl-[acyl-carrier-protein] and UDP-N-acetyl-alpha-D-glucosamine: step 1/6.</text>
</comment>
<comment type="subunit">
    <text evidence="1">Homotrimer.</text>
</comment>
<comment type="subcellular location">
    <subcellularLocation>
        <location evidence="1">Cytoplasm</location>
    </subcellularLocation>
</comment>
<comment type="similarity">
    <text evidence="1">Belongs to the transferase hexapeptide repeat family. LpxA subfamily.</text>
</comment>
<gene>
    <name evidence="1" type="primary">lpxA</name>
    <name type="ordered locus">CTL0793</name>
</gene>
<organism>
    <name type="scientific">Chlamydia trachomatis serovar L2 (strain ATCC VR-902B / DSM 19102 / 434/Bu)</name>
    <dbReference type="NCBI Taxonomy" id="471472"/>
    <lineage>
        <taxon>Bacteria</taxon>
        <taxon>Pseudomonadati</taxon>
        <taxon>Chlamydiota</taxon>
        <taxon>Chlamydiia</taxon>
        <taxon>Chlamydiales</taxon>
        <taxon>Chlamydiaceae</taxon>
        <taxon>Chlamydia/Chlamydophila group</taxon>
        <taxon>Chlamydia</taxon>
    </lineage>
</organism>
<sequence length="280" mass="30724">MTNIHPTAIVEDGARIGNNVTIEPYAIVKKSVTLCDDVVVKSYAYIDGFTTIGRGTTVWPSAMIGNKPQDLKFKGEKTFVEIGEHCEIREFAMITSSTFEGTTVSIGNNCLIMPWAHIAHNCSVGNNVVFSTHVQLAGHVQVGDCVTIGSMVGVHQFVRIGSYSMVGAMSGIRRDIPPFTIGTGNPYALGGINKVGLQRRQVSFETRLALIKTFKRVFRSDESFQASLESVLEDFGEVPEVRHFVEFCRQPSKRGIERGVDCEASLEEPIDKKEGAFVES</sequence>
<keyword id="KW-0012">Acyltransferase</keyword>
<keyword id="KW-0963">Cytoplasm</keyword>
<keyword id="KW-0441">Lipid A biosynthesis</keyword>
<keyword id="KW-0444">Lipid biosynthesis</keyword>
<keyword id="KW-0443">Lipid metabolism</keyword>
<keyword id="KW-0677">Repeat</keyword>
<keyword id="KW-0808">Transferase</keyword>